<organism>
    <name type="scientific">Trichormus variabilis (strain ATCC 29413 / PCC 7937)</name>
    <name type="common">Anabaena variabilis</name>
    <dbReference type="NCBI Taxonomy" id="240292"/>
    <lineage>
        <taxon>Bacteria</taxon>
        <taxon>Bacillati</taxon>
        <taxon>Cyanobacteriota</taxon>
        <taxon>Cyanophyceae</taxon>
        <taxon>Nostocales</taxon>
        <taxon>Nostocaceae</taxon>
        <taxon>Trichormus</taxon>
    </lineage>
</organism>
<gene>
    <name evidence="1" type="primary">ackA</name>
    <name type="ordered locus">Ava_0490</name>
</gene>
<protein>
    <recommendedName>
        <fullName evidence="1">Acetate kinase</fullName>
        <ecNumber evidence="1">2.7.2.1</ecNumber>
    </recommendedName>
    <alternativeName>
        <fullName evidence="1">Acetokinase</fullName>
    </alternativeName>
</protein>
<feature type="chain" id="PRO_1000002205" description="Acetate kinase">
    <location>
        <begin position="1"/>
        <end position="405"/>
    </location>
</feature>
<feature type="active site" description="Proton donor/acceptor" evidence="1">
    <location>
        <position position="156"/>
    </location>
</feature>
<feature type="binding site" evidence="1">
    <location>
        <position position="7"/>
    </location>
    <ligand>
        <name>Mg(2+)</name>
        <dbReference type="ChEBI" id="CHEBI:18420"/>
    </ligand>
</feature>
<feature type="binding site" evidence="1">
    <location>
        <position position="14"/>
    </location>
    <ligand>
        <name>ATP</name>
        <dbReference type="ChEBI" id="CHEBI:30616"/>
    </ligand>
</feature>
<feature type="binding site" evidence="1">
    <location>
        <position position="99"/>
    </location>
    <ligand>
        <name>substrate</name>
    </ligand>
</feature>
<feature type="binding site" evidence="1">
    <location>
        <begin position="215"/>
        <end position="219"/>
    </location>
    <ligand>
        <name>ATP</name>
        <dbReference type="ChEBI" id="CHEBI:30616"/>
    </ligand>
</feature>
<feature type="binding site" evidence="1">
    <location>
        <position position="391"/>
    </location>
    <ligand>
        <name>Mg(2+)</name>
        <dbReference type="ChEBI" id="CHEBI:18420"/>
    </ligand>
</feature>
<feature type="site" description="Transition state stabilizer" evidence="1">
    <location>
        <position position="187"/>
    </location>
</feature>
<feature type="site" description="Transition state stabilizer" evidence="1">
    <location>
        <position position="248"/>
    </location>
</feature>
<reference key="1">
    <citation type="journal article" date="2014" name="Stand. Genomic Sci.">
        <title>Complete genome sequence of Anabaena variabilis ATCC 29413.</title>
        <authorList>
            <person name="Thiel T."/>
            <person name="Pratte B.S."/>
            <person name="Zhong J."/>
            <person name="Goodwin L."/>
            <person name="Copeland A."/>
            <person name="Lucas S."/>
            <person name="Han C."/>
            <person name="Pitluck S."/>
            <person name="Land M.L."/>
            <person name="Kyrpides N.C."/>
            <person name="Woyke T."/>
        </authorList>
    </citation>
    <scope>NUCLEOTIDE SEQUENCE [LARGE SCALE GENOMIC DNA]</scope>
    <source>
        <strain>ATCC 29413 / PCC 7937</strain>
    </source>
</reference>
<keyword id="KW-0067">ATP-binding</keyword>
<keyword id="KW-0963">Cytoplasm</keyword>
<keyword id="KW-0418">Kinase</keyword>
<keyword id="KW-0460">Magnesium</keyword>
<keyword id="KW-0479">Metal-binding</keyword>
<keyword id="KW-0547">Nucleotide-binding</keyword>
<keyword id="KW-0808">Transferase</keyword>
<evidence type="ECO:0000255" key="1">
    <source>
        <dbReference type="HAMAP-Rule" id="MF_00020"/>
    </source>
</evidence>
<name>ACKA_TRIV2</name>
<comment type="function">
    <text evidence="1">Catalyzes the formation of acetyl phosphate from acetate and ATP. Can also catalyze the reverse reaction.</text>
</comment>
<comment type="catalytic activity">
    <reaction evidence="1">
        <text>acetate + ATP = acetyl phosphate + ADP</text>
        <dbReference type="Rhea" id="RHEA:11352"/>
        <dbReference type="ChEBI" id="CHEBI:22191"/>
        <dbReference type="ChEBI" id="CHEBI:30089"/>
        <dbReference type="ChEBI" id="CHEBI:30616"/>
        <dbReference type="ChEBI" id="CHEBI:456216"/>
        <dbReference type="EC" id="2.7.2.1"/>
    </reaction>
</comment>
<comment type="cofactor">
    <cofactor evidence="1">
        <name>Mg(2+)</name>
        <dbReference type="ChEBI" id="CHEBI:18420"/>
    </cofactor>
    <cofactor evidence="1">
        <name>Mn(2+)</name>
        <dbReference type="ChEBI" id="CHEBI:29035"/>
    </cofactor>
    <text evidence="1">Mg(2+). Can also accept Mn(2+).</text>
</comment>
<comment type="pathway">
    <text evidence="1">Metabolic intermediate biosynthesis; acetyl-CoA biosynthesis; acetyl-CoA from acetate: step 1/2.</text>
</comment>
<comment type="subunit">
    <text evidence="1">Homodimer.</text>
</comment>
<comment type="subcellular location">
    <subcellularLocation>
        <location evidence="1">Cytoplasm</location>
    </subcellularLocation>
</comment>
<comment type="similarity">
    <text evidence="1">Belongs to the acetokinase family.</text>
</comment>
<dbReference type="EC" id="2.7.2.1" evidence="1"/>
<dbReference type="EMBL" id="CP000117">
    <property type="protein sequence ID" value="ABA20114.1"/>
    <property type="molecule type" value="Genomic_DNA"/>
</dbReference>
<dbReference type="SMR" id="Q3MFX2"/>
<dbReference type="STRING" id="240292.Ava_0490"/>
<dbReference type="KEGG" id="ava:Ava_0490"/>
<dbReference type="eggNOG" id="COG0282">
    <property type="taxonomic scope" value="Bacteria"/>
</dbReference>
<dbReference type="HOGENOM" id="CLU_020352_0_0_3"/>
<dbReference type="UniPathway" id="UPA00340">
    <property type="reaction ID" value="UER00458"/>
</dbReference>
<dbReference type="Proteomes" id="UP000002533">
    <property type="component" value="Chromosome"/>
</dbReference>
<dbReference type="GO" id="GO:0005737">
    <property type="term" value="C:cytoplasm"/>
    <property type="evidence" value="ECO:0007669"/>
    <property type="project" value="UniProtKB-SubCell"/>
</dbReference>
<dbReference type="GO" id="GO:0008776">
    <property type="term" value="F:acetate kinase activity"/>
    <property type="evidence" value="ECO:0007669"/>
    <property type="project" value="UniProtKB-UniRule"/>
</dbReference>
<dbReference type="GO" id="GO:0005524">
    <property type="term" value="F:ATP binding"/>
    <property type="evidence" value="ECO:0007669"/>
    <property type="project" value="UniProtKB-KW"/>
</dbReference>
<dbReference type="GO" id="GO:0000287">
    <property type="term" value="F:magnesium ion binding"/>
    <property type="evidence" value="ECO:0007669"/>
    <property type="project" value="UniProtKB-UniRule"/>
</dbReference>
<dbReference type="GO" id="GO:0006083">
    <property type="term" value="P:acetate metabolic process"/>
    <property type="evidence" value="ECO:0007669"/>
    <property type="project" value="TreeGrafter"/>
</dbReference>
<dbReference type="GO" id="GO:0006085">
    <property type="term" value="P:acetyl-CoA biosynthetic process"/>
    <property type="evidence" value="ECO:0007669"/>
    <property type="project" value="UniProtKB-UniRule"/>
</dbReference>
<dbReference type="CDD" id="cd24010">
    <property type="entry name" value="ASKHA_NBD_AcK_PK"/>
    <property type="match status" value="1"/>
</dbReference>
<dbReference type="Gene3D" id="3.30.420.40">
    <property type="match status" value="2"/>
</dbReference>
<dbReference type="HAMAP" id="MF_00020">
    <property type="entry name" value="Acetate_kinase"/>
    <property type="match status" value="1"/>
</dbReference>
<dbReference type="InterPro" id="IPR004372">
    <property type="entry name" value="Ac/propionate_kinase"/>
</dbReference>
<dbReference type="InterPro" id="IPR000890">
    <property type="entry name" value="Aliphatic_acid_kin_short-chain"/>
</dbReference>
<dbReference type="InterPro" id="IPR023865">
    <property type="entry name" value="Aliphatic_acid_kinase_CS"/>
</dbReference>
<dbReference type="InterPro" id="IPR043129">
    <property type="entry name" value="ATPase_NBD"/>
</dbReference>
<dbReference type="NCBIfam" id="TIGR00016">
    <property type="entry name" value="ackA"/>
    <property type="match status" value="1"/>
</dbReference>
<dbReference type="PANTHER" id="PTHR21060">
    <property type="entry name" value="ACETATE KINASE"/>
    <property type="match status" value="1"/>
</dbReference>
<dbReference type="PANTHER" id="PTHR21060:SF15">
    <property type="entry name" value="ACETATE KINASE-RELATED"/>
    <property type="match status" value="1"/>
</dbReference>
<dbReference type="Pfam" id="PF00871">
    <property type="entry name" value="Acetate_kinase"/>
    <property type="match status" value="1"/>
</dbReference>
<dbReference type="PIRSF" id="PIRSF000722">
    <property type="entry name" value="Acetate_prop_kin"/>
    <property type="match status" value="1"/>
</dbReference>
<dbReference type="PRINTS" id="PR00471">
    <property type="entry name" value="ACETATEKNASE"/>
</dbReference>
<dbReference type="SUPFAM" id="SSF53067">
    <property type="entry name" value="Actin-like ATPase domain"/>
    <property type="match status" value="2"/>
</dbReference>
<dbReference type="PROSITE" id="PS01075">
    <property type="entry name" value="ACETATE_KINASE_1"/>
    <property type="match status" value="1"/>
</dbReference>
<dbReference type="PROSITE" id="PS01076">
    <property type="entry name" value="ACETATE_KINASE_2"/>
    <property type="match status" value="1"/>
</dbReference>
<sequence length="405" mass="43873">MKVLILNAGSSSQKSCLYEIPDDALLTEAPQPLWEGKVNWTQDRSVAEIEVKTAGGETLHESIYGDSRQAHVTYMLYTLSRGTTKVIGQLSEIDVVGHRVVHGGQNYRNSVIITEEVKQAIAKLSNLAPAHNPAALEGIEAIEKSLGDVPQVAVFDTGFHATLPDAAAIYPGPFEWVEQGIRRYGFHGISHQYCSARAAQILGRDLASLRIITCHLGNGCSLAAIKNGRSIDTTMGFTPLDGLMMGSRSGSIDPGIIVHLMRQSDYSAERLDYVLNKASGLRGISGVSSDLPQVIEAITQGNYRAQLAWDMYVHRLRSGIGSMLASLGGLDVLVFTAGVGEKSPGIRQAACEAFGFLGLKLDPEKNQNNPVDIDIATADSTVRVLVIHTQEDWAIAQQCWHLLNR</sequence>
<proteinExistence type="inferred from homology"/>
<accession>Q3MFX2</accession>